<proteinExistence type="inferred from homology"/>
<feature type="chain" id="PRO_0000271962" description="Cytochrome c biogenesis ATP-binding export protein CcmA">
    <location>
        <begin position="1"/>
        <end position="204"/>
    </location>
</feature>
<feature type="domain" description="ABC transporter" evidence="1">
    <location>
        <begin position="2"/>
        <end position="204"/>
    </location>
</feature>
<feature type="binding site" evidence="1">
    <location>
        <begin position="34"/>
        <end position="41"/>
    </location>
    <ligand>
        <name>ATP</name>
        <dbReference type="ChEBI" id="CHEBI:30616"/>
    </ligand>
</feature>
<name>CCMA_RUEST</name>
<gene>
    <name evidence="1" type="primary">ccmA</name>
    <name type="ordered locus">TM1040_0999</name>
</gene>
<protein>
    <recommendedName>
        <fullName evidence="1">Cytochrome c biogenesis ATP-binding export protein CcmA</fullName>
        <ecNumber evidence="1">7.6.2.5</ecNumber>
    </recommendedName>
    <alternativeName>
        <fullName evidence="1">Heme exporter protein A</fullName>
    </alternativeName>
</protein>
<dbReference type="EC" id="7.6.2.5" evidence="1"/>
<dbReference type="EMBL" id="CP000377">
    <property type="protein sequence ID" value="ABF63732.1"/>
    <property type="molecule type" value="Genomic_DNA"/>
</dbReference>
<dbReference type="RefSeq" id="WP_011538342.1">
    <property type="nucleotide sequence ID" value="NC_008044.1"/>
</dbReference>
<dbReference type="SMR" id="Q1GHY4"/>
<dbReference type="STRING" id="292414.TM1040_0999"/>
<dbReference type="KEGG" id="sit:TM1040_0999"/>
<dbReference type="eggNOG" id="COG4133">
    <property type="taxonomic scope" value="Bacteria"/>
</dbReference>
<dbReference type="HOGENOM" id="CLU_000604_1_2_5"/>
<dbReference type="OrthoDB" id="9800654at2"/>
<dbReference type="Proteomes" id="UP000000636">
    <property type="component" value="Chromosome"/>
</dbReference>
<dbReference type="GO" id="GO:0005886">
    <property type="term" value="C:plasma membrane"/>
    <property type="evidence" value="ECO:0007669"/>
    <property type="project" value="UniProtKB-SubCell"/>
</dbReference>
<dbReference type="GO" id="GO:0015439">
    <property type="term" value="F:ABC-type heme transporter activity"/>
    <property type="evidence" value="ECO:0007669"/>
    <property type="project" value="UniProtKB-EC"/>
</dbReference>
<dbReference type="GO" id="GO:0005524">
    <property type="term" value="F:ATP binding"/>
    <property type="evidence" value="ECO:0007669"/>
    <property type="project" value="UniProtKB-KW"/>
</dbReference>
<dbReference type="GO" id="GO:0016887">
    <property type="term" value="F:ATP hydrolysis activity"/>
    <property type="evidence" value="ECO:0007669"/>
    <property type="project" value="InterPro"/>
</dbReference>
<dbReference type="GO" id="GO:0017004">
    <property type="term" value="P:cytochrome complex assembly"/>
    <property type="evidence" value="ECO:0007669"/>
    <property type="project" value="UniProtKB-KW"/>
</dbReference>
<dbReference type="Gene3D" id="3.40.50.300">
    <property type="entry name" value="P-loop containing nucleotide triphosphate hydrolases"/>
    <property type="match status" value="1"/>
</dbReference>
<dbReference type="InterPro" id="IPR003593">
    <property type="entry name" value="AAA+_ATPase"/>
</dbReference>
<dbReference type="InterPro" id="IPR003439">
    <property type="entry name" value="ABC_transporter-like_ATP-bd"/>
</dbReference>
<dbReference type="InterPro" id="IPR017871">
    <property type="entry name" value="ABC_transporter-like_CS"/>
</dbReference>
<dbReference type="InterPro" id="IPR005895">
    <property type="entry name" value="ABC_transptr_haem_export_CcmA"/>
</dbReference>
<dbReference type="InterPro" id="IPR027417">
    <property type="entry name" value="P-loop_NTPase"/>
</dbReference>
<dbReference type="NCBIfam" id="TIGR01189">
    <property type="entry name" value="ccmA"/>
    <property type="match status" value="1"/>
</dbReference>
<dbReference type="PANTHER" id="PTHR43499">
    <property type="entry name" value="ABC TRANSPORTER I FAMILY MEMBER 1"/>
    <property type="match status" value="1"/>
</dbReference>
<dbReference type="PANTHER" id="PTHR43499:SF1">
    <property type="entry name" value="ABC TRANSPORTER I FAMILY MEMBER 1"/>
    <property type="match status" value="1"/>
</dbReference>
<dbReference type="Pfam" id="PF00005">
    <property type="entry name" value="ABC_tran"/>
    <property type="match status" value="1"/>
</dbReference>
<dbReference type="SMART" id="SM00382">
    <property type="entry name" value="AAA"/>
    <property type="match status" value="1"/>
</dbReference>
<dbReference type="SUPFAM" id="SSF52540">
    <property type="entry name" value="P-loop containing nucleoside triphosphate hydrolases"/>
    <property type="match status" value="1"/>
</dbReference>
<dbReference type="PROSITE" id="PS00211">
    <property type="entry name" value="ABC_TRANSPORTER_1"/>
    <property type="match status" value="1"/>
</dbReference>
<dbReference type="PROSITE" id="PS50893">
    <property type="entry name" value="ABC_TRANSPORTER_2"/>
    <property type="match status" value="1"/>
</dbReference>
<dbReference type="PROSITE" id="PS51243">
    <property type="entry name" value="CCMA"/>
    <property type="match status" value="1"/>
</dbReference>
<sequence length="204" mass="21178">MIEVRDLGVSRGGLPVLAGVNFALSGGEALVLRGPNGIGKTTLLRTLARLQLPLAGEILGDAEDIAYAAHADGVKLTLTVAENLSFWSRVFAGGDPAVAIAAFNLDALQHRPAGGLSAGQKRRLSLARLMVTGRRLWILDEPTVSLDAASVQLFASSIRAHLASGGAAIMATHIDLGIEGRVLDLGPFKAKLPALDAEDLGGFL</sequence>
<comment type="function">
    <text evidence="1">Part of the ABC transporter complex CcmAB involved in the biogenesis of c-type cytochromes; once thought to export heme, this seems not to be the case, but its exact role is uncertain. Responsible for energy coupling to the transport system.</text>
</comment>
<comment type="catalytic activity">
    <reaction evidence="1">
        <text>heme b(in) + ATP + H2O = heme b(out) + ADP + phosphate + H(+)</text>
        <dbReference type="Rhea" id="RHEA:19261"/>
        <dbReference type="ChEBI" id="CHEBI:15377"/>
        <dbReference type="ChEBI" id="CHEBI:15378"/>
        <dbReference type="ChEBI" id="CHEBI:30616"/>
        <dbReference type="ChEBI" id="CHEBI:43474"/>
        <dbReference type="ChEBI" id="CHEBI:60344"/>
        <dbReference type="ChEBI" id="CHEBI:456216"/>
        <dbReference type="EC" id="7.6.2.5"/>
    </reaction>
</comment>
<comment type="subunit">
    <text evidence="1">The complex is composed of two ATP-binding proteins (CcmA) and two transmembrane proteins (CcmB).</text>
</comment>
<comment type="subcellular location">
    <subcellularLocation>
        <location evidence="1">Cell inner membrane</location>
        <topology evidence="1">Peripheral membrane protein</topology>
    </subcellularLocation>
</comment>
<comment type="similarity">
    <text evidence="1">Belongs to the ABC transporter superfamily. CcmA exporter (TC 3.A.1.107) family.</text>
</comment>
<organism>
    <name type="scientific">Ruegeria sp. (strain TM1040)</name>
    <name type="common">Silicibacter sp.</name>
    <dbReference type="NCBI Taxonomy" id="292414"/>
    <lineage>
        <taxon>Bacteria</taxon>
        <taxon>Pseudomonadati</taxon>
        <taxon>Pseudomonadota</taxon>
        <taxon>Alphaproteobacteria</taxon>
        <taxon>Rhodobacterales</taxon>
        <taxon>Roseobacteraceae</taxon>
        <taxon>Ruegeria</taxon>
    </lineage>
</organism>
<accession>Q1GHY4</accession>
<evidence type="ECO:0000255" key="1">
    <source>
        <dbReference type="HAMAP-Rule" id="MF_01707"/>
    </source>
</evidence>
<reference key="1">
    <citation type="submission" date="2006-05" db="EMBL/GenBank/DDBJ databases">
        <title>Complete sequence of chromosome of Silicibacter sp. TM1040.</title>
        <authorList>
            <consortium name="US DOE Joint Genome Institute"/>
            <person name="Copeland A."/>
            <person name="Lucas S."/>
            <person name="Lapidus A."/>
            <person name="Barry K."/>
            <person name="Detter J.C."/>
            <person name="Glavina del Rio T."/>
            <person name="Hammon N."/>
            <person name="Israni S."/>
            <person name="Dalin E."/>
            <person name="Tice H."/>
            <person name="Pitluck S."/>
            <person name="Brettin T."/>
            <person name="Bruce D."/>
            <person name="Han C."/>
            <person name="Tapia R."/>
            <person name="Goodwin L."/>
            <person name="Thompson L.S."/>
            <person name="Gilna P."/>
            <person name="Schmutz J."/>
            <person name="Larimer F."/>
            <person name="Land M."/>
            <person name="Hauser L."/>
            <person name="Kyrpides N."/>
            <person name="Kim E."/>
            <person name="Belas R."/>
            <person name="Moran M.A."/>
            <person name="Buchan A."/>
            <person name="Gonzalez J.M."/>
            <person name="Schell M.A."/>
            <person name="Sun F."/>
            <person name="Richardson P."/>
        </authorList>
    </citation>
    <scope>NUCLEOTIDE SEQUENCE [LARGE SCALE GENOMIC DNA]</scope>
    <source>
        <strain>TM1040</strain>
    </source>
</reference>
<keyword id="KW-0067">ATP-binding</keyword>
<keyword id="KW-0997">Cell inner membrane</keyword>
<keyword id="KW-1003">Cell membrane</keyword>
<keyword id="KW-0201">Cytochrome c-type biogenesis</keyword>
<keyword id="KW-0472">Membrane</keyword>
<keyword id="KW-0547">Nucleotide-binding</keyword>
<keyword id="KW-1185">Reference proteome</keyword>
<keyword id="KW-1278">Translocase</keyword>
<keyword id="KW-0813">Transport</keyword>